<evidence type="ECO:0000255" key="1">
    <source>
        <dbReference type="HAMAP-Rule" id="MF_03122"/>
    </source>
</evidence>
<evidence type="ECO:0000305" key="2"/>
<feature type="initiator methionine" description="Removed" evidence="1">
    <location>
        <position position="1"/>
    </location>
</feature>
<feature type="chain" id="PRO_0000389301" description="Small ribosomal subunit protein eS1">
    <location>
        <begin position="2"/>
        <end position="268"/>
    </location>
</feature>
<accession>A7L6A0</accession>
<dbReference type="EMBL" id="EF675773">
    <property type="protein sequence ID" value="ABS18355.1"/>
    <property type="molecule type" value="mRNA"/>
</dbReference>
<dbReference type="RefSeq" id="XP_065582272.1">
    <property type="nucleotide sequence ID" value="XM_065726200.1"/>
</dbReference>
<dbReference type="SMR" id="A7L6A0"/>
<dbReference type="GeneID" id="136041499"/>
<dbReference type="GO" id="GO:0022627">
    <property type="term" value="C:cytosolic small ribosomal subunit"/>
    <property type="evidence" value="ECO:0007669"/>
    <property type="project" value="UniProtKB-UniRule"/>
</dbReference>
<dbReference type="GO" id="GO:0003735">
    <property type="term" value="F:structural constituent of ribosome"/>
    <property type="evidence" value="ECO:0007669"/>
    <property type="project" value="UniProtKB-UniRule"/>
</dbReference>
<dbReference type="GO" id="GO:0006412">
    <property type="term" value="P:translation"/>
    <property type="evidence" value="ECO:0007669"/>
    <property type="project" value="UniProtKB-UniRule"/>
</dbReference>
<dbReference type="HAMAP" id="MF_03122">
    <property type="entry name" value="Ribosomal_eS1_euk"/>
    <property type="match status" value="1"/>
</dbReference>
<dbReference type="InterPro" id="IPR001593">
    <property type="entry name" value="Ribosomal_eS1"/>
</dbReference>
<dbReference type="InterPro" id="IPR018281">
    <property type="entry name" value="Ribosomal_eS1_CS"/>
</dbReference>
<dbReference type="InterPro" id="IPR027500">
    <property type="entry name" value="Ribosomal_eS1_euk"/>
</dbReference>
<dbReference type="PANTHER" id="PTHR11830">
    <property type="entry name" value="40S RIBOSOMAL PROTEIN S3A"/>
    <property type="match status" value="1"/>
</dbReference>
<dbReference type="Pfam" id="PF01015">
    <property type="entry name" value="Ribosomal_S3Ae"/>
    <property type="match status" value="1"/>
</dbReference>
<dbReference type="SMART" id="SM01397">
    <property type="entry name" value="Ribosomal_S3Ae"/>
    <property type="match status" value="1"/>
</dbReference>
<dbReference type="PROSITE" id="PS01191">
    <property type="entry name" value="RIBOSOMAL_S3AE"/>
    <property type="match status" value="1"/>
</dbReference>
<proteinExistence type="evidence at transcript level"/>
<sequence>MAVGKNKGLAKSGKKGLKKKIVDPFTRKDWYDVKAPSLFTNRDIGKTLVNRTAGTKIASDSLKGRVFEVSLADLQGESEAERSFRKFRLIAEEVQGRYLLTNFHGMDFTTDKLRSLVKKWQTLIECSVDVKTTDSYLLRVFCIGFTQKDQRSQRKTCYAQHTQVRAIRKKMTEIITKEISSGDLKEAVSKLIPDSIAKDIEKSCHSIYPIHEVYIRKVKVLKKPKFDMGKLLDMHGEGAVTKRVTTEDGTGVVISRPEGYEPPIQESV</sequence>
<keyword id="KW-0963">Cytoplasm</keyword>
<keyword id="KW-0687">Ribonucleoprotein</keyword>
<keyword id="KW-0689">Ribosomal protein</keyword>
<comment type="subunit">
    <text evidence="1">Component of the small ribosomal subunit. Mature ribosomes consist of a small (40S) and a large (60S) subunit. The 40S subunit contains about 33 different proteins and 1 molecule of RNA (18S). The 60S subunit contains about 49 different proteins and 3 molecules of RNA (28S, 5.8S and 5S).</text>
</comment>
<comment type="subcellular location">
    <subcellularLocation>
        <location evidence="1">Cytoplasm</location>
    </subcellularLocation>
</comment>
<comment type="similarity">
    <text evidence="1">Belongs to the eukaryotic ribosomal protein eS1 family.</text>
</comment>
<organism>
    <name type="scientific">Artemia franciscana</name>
    <name type="common">Brine shrimp</name>
    <name type="synonym">Artemia sanfranciscana</name>
    <dbReference type="NCBI Taxonomy" id="6661"/>
    <lineage>
        <taxon>Eukaryota</taxon>
        <taxon>Metazoa</taxon>
        <taxon>Ecdysozoa</taxon>
        <taxon>Arthropoda</taxon>
        <taxon>Crustacea</taxon>
        <taxon>Branchiopoda</taxon>
        <taxon>Anostraca</taxon>
        <taxon>Artemiidae</taxon>
        <taxon>Artemia</taxon>
    </lineage>
</organism>
<name>RS3A_ARTSF</name>
<protein>
    <recommendedName>
        <fullName evidence="1">Small ribosomal subunit protein eS1</fullName>
    </recommendedName>
    <alternativeName>
        <fullName evidence="2">40S ribosomal protein S3a</fullName>
    </alternativeName>
</protein>
<reference key="1">
    <citation type="submission" date="2007-06" db="EMBL/GenBank/DDBJ databases">
        <title>Isolation of an mRNA for 40S ribosomal protein S3a from Artemia franciscana.</title>
        <authorList>
            <person name="Chu A."/>
            <person name="Hoppe C."/>
            <person name="Vershon A.K."/>
            <person name="Nemeroff M.E."/>
        </authorList>
    </citation>
    <scope>NUCLEOTIDE SEQUENCE [MRNA]</scope>
</reference>